<feature type="chain" id="PRO_0000083193" description="Capsid protein">
    <location>
        <begin position="1"/>
        <end position="190"/>
    </location>
</feature>
<feature type="region of interest" description="Disordered" evidence="2">
    <location>
        <begin position="1"/>
        <end position="20"/>
    </location>
</feature>
<keyword id="KW-0167">Capsid protein</keyword>
<keyword id="KW-0687">Ribonucleoprotein</keyword>
<keyword id="KW-0694">RNA-binding</keyword>
<keyword id="KW-1142">T=3 icosahedral capsid protein</keyword>
<keyword id="KW-0543">Viral nucleoprotein</keyword>
<keyword id="KW-0946">Virion</keyword>
<organism>
    <name type="scientific">Broad bean mottle virus</name>
    <dbReference type="NCBI Taxonomy" id="12301"/>
    <lineage>
        <taxon>Viruses</taxon>
        <taxon>Riboviria</taxon>
        <taxon>Orthornavirae</taxon>
        <taxon>Kitrinoviricota</taxon>
        <taxon>Alsuviricetes</taxon>
        <taxon>Martellivirales</taxon>
        <taxon>Bromoviridae</taxon>
        <taxon>Bromovirus</taxon>
    </lineage>
</organism>
<dbReference type="EMBL" id="M60291">
    <property type="protein sequence ID" value="AAA42739.1"/>
    <property type="molecule type" value="Genomic_RNA"/>
</dbReference>
<dbReference type="PIR" id="C42453">
    <property type="entry name" value="VCWMBB"/>
</dbReference>
<dbReference type="RefSeq" id="NP_658998.1">
    <property type="nucleotide sequence ID" value="NC_004006.1"/>
</dbReference>
<dbReference type="SMR" id="P24402"/>
<dbReference type="KEGG" id="vg:962138"/>
<dbReference type="OrthoDB" id="17901at10239"/>
<dbReference type="Proteomes" id="UP000007448">
    <property type="component" value="Genome"/>
</dbReference>
<dbReference type="GO" id="GO:1990904">
    <property type="term" value="C:ribonucleoprotein complex"/>
    <property type="evidence" value="ECO:0007669"/>
    <property type="project" value="UniProtKB-KW"/>
</dbReference>
<dbReference type="GO" id="GO:0039617">
    <property type="term" value="C:T=3 icosahedral viral capsid"/>
    <property type="evidence" value="ECO:0007669"/>
    <property type="project" value="UniProtKB-KW"/>
</dbReference>
<dbReference type="GO" id="GO:0019013">
    <property type="term" value="C:viral nucleocapsid"/>
    <property type="evidence" value="ECO:0007669"/>
    <property type="project" value="UniProtKB-KW"/>
</dbReference>
<dbReference type="GO" id="GO:0003723">
    <property type="term" value="F:RNA binding"/>
    <property type="evidence" value="ECO:0007669"/>
    <property type="project" value="UniProtKB-KW"/>
</dbReference>
<dbReference type="GO" id="GO:0005198">
    <property type="term" value="F:structural molecule activity"/>
    <property type="evidence" value="ECO:0007669"/>
    <property type="project" value="InterPro"/>
</dbReference>
<dbReference type="Gene3D" id="2.60.120.220">
    <property type="entry name" value="Satellite virus coat domain"/>
    <property type="match status" value="1"/>
</dbReference>
<dbReference type="InterPro" id="IPR002009">
    <property type="entry name" value="Bromo_CP"/>
</dbReference>
<dbReference type="Pfam" id="PF01318">
    <property type="entry name" value="Bromo_coat"/>
    <property type="match status" value="1"/>
</dbReference>
<dbReference type="SUPFAM" id="SSF88633">
    <property type="entry name" value="Positive stranded ssRNA viruses"/>
    <property type="match status" value="1"/>
</dbReference>
<accession>P24402</accession>
<reference key="1">
    <citation type="journal article" date="1992" name="Virology">
        <title>The nucleotide sequence and genome organization of the RNA2 and RNA3 segments in broad bean mottle virus.</title>
        <authorList>
            <person name="Romero J."/>
            <person name="Dzianott A.M."/>
            <person name="Bujarski J.J."/>
        </authorList>
    </citation>
    <scope>NUCLEOTIDE SEQUENCE [GENOMIC RNA]</scope>
</reference>
<proteinExistence type="inferred from homology"/>
<gene>
    <name type="ORF">ORF3b</name>
</gene>
<evidence type="ECO:0000250" key="1"/>
<evidence type="ECO:0000256" key="2">
    <source>
        <dbReference type="SAM" id="MobiDB-lite"/>
    </source>
</evidence>
<evidence type="ECO:0000305" key="3"/>
<organismHost>
    <name type="scientific">Vicia faba</name>
    <name type="common">Broad bean</name>
    <name type="synonym">Faba vulgaris</name>
    <dbReference type="NCBI Taxonomy" id="3906"/>
</organismHost>
<protein>
    <recommendedName>
        <fullName>Capsid protein</fullName>
        <shortName>CP</shortName>
    </recommendedName>
    <alternativeName>
        <fullName>Coat protein</fullName>
    </alternativeName>
</protein>
<comment type="function">
    <text evidence="1">Capsid protein. Probably binds RNA and plays a role in packaging (By similarity).</text>
</comment>
<comment type="subcellular location">
    <subcellularLocation>
        <location evidence="3">Virion</location>
    </subcellularLocation>
</comment>
<comment type="miscellaneous">
    <text>The virus has a tripartite genome (RNA1, RNA2 and RNA3) and an encapsidated subgenomic RNA (RNA4) from which the coat protein is expressed. Virions are icosahedral, not enveloped, with 32 capsomers per nucleocapsid.</text>
</comment>
<comment type="similarity">
    <text evidence="3">Belongs to the bromovirus capsid protein family.</text>
</comment>
<sequence>MTTSATGKALNRKQRRALNRSNRLRKEFQPVIVEPLASGQAVSLKTRTGYCVTQFVSNNPEVKAKEVVSVSVKLPDHLAVEANRALKVGRISILLGLLPTVAGTVKVCLTEKQDSPAESFKRALAVADSSKEVASAFYVDGFKDVSLGDLEKDLSIYLYSEAALAANSIRIRMEVEHVMPKFITRFSPFA</sequence>
<name>CAPSD_BBMV</name>